<proteinExistence type="evidence at protein level"/>
<dbReference type="EC" id="3.1.21.2" evidence="1 2 3"/>
<dbReference type="EMBL" id="AE017221">
    <property type="protein sequence ID" value="AAS80830.1"/>
    <property type="molecule type" value="Genomic_DNA"/>
</dbReference>
<dbReference type="RefSeq" id="WP_011172928.1">
    <property type="nucleotide sequence ID" value="NC_005835.1"/>
</dbReference>
<dbReference type="SMR" id="Q72KH8"/>
<dbReference type="KEGG" id="tth:TT_C0482"/>
<dbReference type="eggNOG" id="COG0648">
    <property type="taxonomic scope" value="Bacteria"/>
</dbReference>
<dbReference type="HOGENOM" id="CLU_025885_0_4_0"/>
<dbReference type="OrthoDB" id="9805666at2"/>
<dbReference type="BRENDA" id="3.1.21.2">
    <property type="organism ID" value="2305"/>
</dbReference>
<dbReference type="Proteomes" id="UP000000592">
    <property type="component" value="Chromosome"/>
</dbReference>
<dbReference type="GO" id="GO:0008833">
    <property type="term" value="F:deoxyribonuclease IV (phage-T4-induced) activity"/>
    <property type="evidence" value="ECO:0007669"/>
    <property type="project" value="UniProtKB-UniRule"/>
</dbReference>
<dbReference type="GO" id="GO:0003677">
    <property type="term" value="F:DNA binding"/>
    <property type="evidence" value="ECO:0007669"/>
    <property type="project" value="InterPro"/>
</dbReference>
<dbReference type="GO" id="GO:0003906">
    <property type="term" value="F:DNA-(apurinic or apyrimidinic site) endonuclease activity"/>
    <property type="evidence" value="ECO:0007669"/>
    <property type="project" value="TreeGrafter"/>
</dbReference>
<dbReference type="GO" id="GO:0008081">
    <property type="term" value="F:phosphoric diester hydrolase activity"/>
    <property type="evidence" value="ECO:0007669"/>
    <property type="project" value="TreeGrafter"/>
</dbReference>
<dbReference type="GO" id="GO:0008270">
    <property type="term" value="F:zinc ion binding"/>
    <property type="evidence" value="ECO:0007669"/>
    <property type="project" value="UniProtKB-UniRule"/>
</dbReference>
<dbReference type="GO" id="GO:0006284">
    <property type="term" value="P:base-excision repair"/>
    <property type="evidence" value="ECO:0007669"/>
    <property type="project" value="TreeGrafter"/>
</dbReference>
<dbReference type="CDD" id="cd00019">
    <property type="entry name" value="AP2Ec"/>
    <property type="match status" value="1"/>
</dbReference>
<dbReference type="Gene3D" id="3.20.20.150">
    <property type="entry name" value="Divalent-metal-dependent TIM barrel enzymes"/>
    <property type="match status" value="1"/>
</dbReference>
<dbReference type="HAMAP" id="MF_00152">
    <property type="entry name" value="Nfo"/>
    <property type="match status" value="1"/>
</dbReference>
<dbReference type="InterPro" id="IPR001719">
    <property type="entry name" value="AP_endonuc_2"/>
</dbReference>
<dbReference type="InterPro" id="IPR018246">
    <property type="entry name" value="AP_endonuc_F2_Zn_BS"/>
</dbReference>
<dbReference type="InterPro" id="IPR036237">
    <property type="entry name" value="Xyl_isomerase-like_sf"/>
</dbReference>
<dbReference type="InterPro" id="IPR013022">
    <property type="entry name" value="Xyl_isomerase-like_TIM-brl"/>
</dbReference>
<dbReference type="NCBIfam" id="TIGR00587">
    <property type="entry name" value="nfo"/>
    <property type="match status" value="1"/>
</dbReference>
<dbReference type="PANTHER" id="PTHR21445:SF0">
    <property type="entry name" value="APURINIC-APYRIMIDINIC ENDONUCLEASE"/>
    <property type="match status" value="1"/>
</dbReference>
<dbReference type="PANTHER" id="PTHR21445">
    <property type="entry name" value="ENDONUCLEASE IV ENDODEOXYRIBONUCLEASE IV"/>
    <property type="match status" value="1"/>
</dbReference>
<dbReference type="Pfam" id="PF01261">
    <property type="entry name" value="AP_endonuc_2"/>
    <property type="match status" value="1"/>
</dbReference>
<dbReference type="SMART" id="SM00518">
    <property type="entry name" value="AP2Ec"/>
    <property type="match status" value="1"/>
</dbReference>
<dbReference type="SUPFAM" id="SSF51658">
    <property type="entry name" value="Xylose isomerase-like"/>
    <property type="match status" value="1"/>
</dbReference>
<dbReference type="PROSITE" id="PS00731">
    <property type="entry name" value="AP_NUCLEASE_F2_3"/>
    <property type="match status" value="1"/>
</dbReference>
<dbReference type="PROSITE" id="PS51432">
    <property type="entry name" value="AP_NUCLEASE_F2_4"/>
    <property type="match status" value="1"/>
</dbReference>
<keyword id="KW-0227">DNA damage</keyword>
<keyword id="KW-0234">DNA repair</keyword>
<keyword id="KW-0255">Endonuclease</keyword>
<keyword id="KW-0378">Hydrolase</keyword>
<keyword id="KW-0479">Metal-binding</keyword>
<keyword id="KW-0540">Nuclease</keyword>
<keyword id="KW-0862">Zinc</keyword>
<sequence>MPRYGFHLSIAGKKGVAGAVEEATALGLTAFQIFAKSPRSWRPRALSPAEVEAFRALREASGGLPAVIHASYLVNLGAEGELWEKSVASLADDLEKAALLGVEYVVVHPGSGRPERVKEGALKALRLAGVRSRPVLLVENTAGGGEKVGARFEELAWLVADTPLQVCLDTCHAYAAGYDVAEDPLGVLDALDRAVGLERVPVVHLNDSVGGLGSRVDHHAHLLQGKIGEGLKRVFLDPRLKDRVFILETPRGPEEDAWNLRVLRAWLEEA</sequence>
<gene>
    <name evidence="1" type="primary">nfo</name>
    <name type="ordered locus">TT_C0482</name>
</gene>
<name>END4_THET2</name>
<protein>
    <recommendedName>
        <fullName evidence="4">Endonuclease 4</fullName>
        <ecNumber evidence="1 2 3">3.1.21.2</ecNumber>
    </recommendedName>
    <alternativeName>
        <fullName evidence="1">Endodeoxyribonuclease IV</fullName>
    </alternativeName>
    <alternativeName>
        <fullName evidence="1 4">Endonuclease IV</fullName>
    </alternativeName>
    <alternativeName>
        <fullName evidence="4">TthNfo</fullName>
    </alternativeName>
</protein>
<accession>Q72KH8</accession>
<reference key="1">
    <citation type="journal article" date="2004" name="Nat. Biotechnol.">
        <title>The genome sequence of the extreme thermophile Thermus thermophilus.</title>
        <authorList>
            <person name="Henne A."/>
            <person name="Brueggemann H."/>
            <person name="Raasch C."/>
            <person name="Wiezer A."/>
            <person name="Hartsch T."/>
            <person name="Liesegang H."/>
            <person name="Johann A."/>
            <person name="Lienard T."/>
            <person name="Gohl O."/>
            <person name="Martinez-Arias R."/>
            <person name="Jacobi C."/>
            <person name="Starkuviene V."/>
            <person name="Schlenczeck S."/>
            <person name="Dencker S."/>
            <person name="Huber R."/>
            <person name="Klenk H.-P."/>
            <person name="Kramer W."/>
            <person name="Merkl R."/>
            <person name="Gottschalk G."/>
            <person name="Fritz H.-J."/>
        </authorList>
    </citation>
    <scope>NUCLEOTIDE SEQUENCE [LARGE SCALE GENOMIC DNA]</scope>
    <source>
        <strain>ATCC BAA-163 / DSM 7039 / HB27</strain>
    </source>
</reference>
<reference key="2">
    <citation type="journal article" date="2006" name="Biochem. Biophys. Res. Commun.">
        <title>A versatile endonuclease IV from Thermus thermophilus has uracil-excising and 3'-5' exonuclease activity.</title>
        <authorList>
            <person name="Back J.H."/>
            <person name="Chung J.H."/>
            <person name="Park J.H."/>
            <person name="Han Y.S."/>
        </authorList>
    </citation>
    <scope>FUNCTION</scope>
    <scope>CATALYTIC ACTIVITY</scope>
</reference>
<reference key="3">
    <citation type="journal article" date="2010" name="Nucleic Acids Res.">
        <title>Helix-hairpin-helix protein MJ1434 from Methanocaldococcus jannaschii and EndoIV homologue TTC0482 from Thermus thermophilus HB27 do not process DNA uracil residues.</title>
        <authorList>
            <person name="Schomacher L."/>
            <person name="Smolorz S."/>
            <person name="Ciirdaeva E."/>
            <person name="Ber S."/>
            <person name="Kramer W."/>
            <person name="Fritz H.J."/>
        </authorList>
    </citation>
    <scope>FUNCTION</scope>
    <scope>CATALYTIC ACTIVITY</scope>
    <scope>SHOWS THAT IT HAS NO URACIL-DNA GLYCOSYLASE ACTIVITY</scope>
</reference>
<comment type="function">
    <text evidence="2 3">Endonuclease IV plays a role in DNA repair. It cleaves phosphodiester bonds at apurinic or apyrimidinic (AP) sites, generating a 3'-hydroxyl group and a 5'-terminal sugar phosphate (PubMed:16782061, PubMed:20410075). In addition, possesses a 3'-5' exonuclease activity (PubMed:16782061).</text>
</comment>
<comment type="catalytic activity">
    <reaction evidence="1 2 3">
        <text>Endonucleolytic cleavage to 5'-phosphooligonucleotide end-products.</text>
        <dbReference type="EC" id="3.1.21.2"/>
    </reaction>
</comment>
<comment type="cofactor">
    <cofactor evidence="1">
        <name>Zn(2+)</name>
        <dbReference type="ChEBI" id="CHEBI:29105"/>
    </cofactor>
    <text evidence="1">Binds 3 Zn(2+) ions.</text>
</comment>
<comment type="similarity">
    <text evidence="1">Belongs to the AP endonuclease 2 family.</text>
</comment>
<comment type="caution">
    <text evidence="2 3">Back et al. found that TthNfo also catalyzes the excision of uracil from DNA, but further protein analysis by Schomacher et al. show that it does not exhibit DNA uracil glycosylase activity or DNA uridine endonuclease activity.</text>
</comment>
<organism>
    <name type="scientific">Thermus thermophilus (strain ATCC BAA-163 / DSM 7039 / HB27)</name>
    <dbReference type="NCBI Taxonomy" id="262724"/>
    <lineage>
        <taxon>Bacteria</taxon>
        <taxon>Thermotogati</taxon>
        <taxon>Deinococcota</taxon>
        <taxon>Deinococci</taxon>
        <taxon>Thermales</taxon>
        <taxon>Thermaceae</taxon>
        <taxon>Thermus</taxon>
    </lineage>
</organism>
<feature type="chain" id="PRO_0000190882" description="Endonuclease 4">
    <location>
        <begin position="1"/>
        <end position="270"/>
    </location>
</feature>
<feature type="binding site" evidence="1">
    <location>
        <position position="69"/>
    </location>
    <ligand>
        <name>Zn(2+)</name>
        <dbReference type="ChEBI" id="CHEBI:29105"/>
        <label>1</label>
    </ligand>
</feature>
<feature type="binding site" evidence="1">
    <location>
        <position position="108"/>
    </location>
    <ligand>
        <name>Zn(2+)</name>
        <dbReference type="ChEBI" id="CHEBI:29105"/>
        <label>1</label>
    </ligand>
</feature>
<feature type="binding site" evidence="1">
    <location>
        <position position="139"/>
    </location>
    <ligand>
        <name>Zn(2+)</name>
        <dbReference type="ChEBI" id="CHEBI:29105"/>
        <label>1</label>
    </ligand>
</feature>
<feature type="binding site" evidence="1">
    <location>
        <position position="139"/>
    </location>
    <ligand>
        <name>Zn(2+)</name>
        <dbReference type="ChEBI" id="CHEBI:29105"/>
        <label>2</label>
    </ligand>
</feature>
<feature type="binding site" evidence="1">
    <location>
        <position position="169"/>
    </location>
    <ligand>
        <name>Zn(2+)</name>
        <dbReference type="ChEBI" id="CHEBI:29105"/>
        <label>2</label>
    </ligand>
</feature>
<feature type="binding site" evidence="1">
    <location>
        <position position="172"/>
    </location>
    <ligand>
        <name>Zn(2+)</name>
        <dbReference type="ChEBI" id="CHEBI:29105"/>
        <label>3</label>
    </ligand>
</feature>
<feature type="binding site" evidence="1">
    <location>
        <position position="204"/>
    </location>
    <ligand>
        <name>Zn(2+)</name>
        <dbReference type="ChEBI" id="CHEBI:29105"/>
        <label>2</label>
    </ligand>
</feature>
<feature type="binding site" evidence="1">
    <location>
        <position position="217"/>
    </location>
    <ligand>
        <name>Zn(2+)</name>
        <dbReference type="ChEBI" id="CHEBI:29105"/>
        <label>3</label>
    </ligand>
</feature>
<feature type="binding site" evidence="1">
    <location>
        <position position="219"/>
    </location>
    <ligand>
        <name>Zn(2+)</name>
        <dbReference type="ChEBI" id="CHEBI:29105"/>
        <label>3</label>
    </ligand>
</feature>
<feature type="binding site" evidence="1">
    <location>
        <position position="248"/>
    </location>
    <ligand>
        <name>Zn(2+)</name>
        <dbReference type="ChEBI" id="CHEBI:29105"/>
        <label>2</label>
    </ligand>
</feature>
<evidence type="ECO:0000255" key="1">
    <source>
        <dbReference type="HAMAP-Rule" id="MF_00152"/>
    </source>
</evidence>
<evidence type="ECO:0000269" key="2">
    <source>
    </source>
</evidence>
<evidence type="ECO:0000269" key="3">
    <source>
    </source>
</evidence>
<evidence type="ECO:0000303" key="4">
    <source>
    </source>
</evidence>